<comment type="function">
    <text evidence="1 2">Mediates bacterial resistance to the antibiotic spectinomycin and probably also to streptomycin.</text>
</comment>
<comment type="catalytic activity">
    <reaction evidence="4">
        <text>streptomycin + ATP = 3''-O-adenylylstreptomycin + diphosphate</text>
        <dbReference type="Rhea" id="RHEA:20245"/>
        <dbReference type="ChEBI" id="CHEBI:30616"/>
        <dbReference type="ChEBI" id="CHEBI:33019"/>
        <dbReference type="ChEBI" id="CHEBI:58007"/>
        <dbReference type="ChEBI" id="CHEBI:58605"/>
        <dbReference type="EC" id="2.7.7.47"/>
    </reaction>
</comment>
<comment type="catalytic activity">
    <reaction evidence="4">
        <text>spectinomycin + ATP = 9-O-adenylylspectinomycin + diphosphate</text>
        <dbReference type="Rhea" id="RHEA:63228"/>
        <dbReference type="ChEBI" id="CHEBI:30616"/>
        <dbReference type="ChEBI" id="CHEBI:33019"/>
        <dbReference type="ChEBI" id="CHEBI:146260"/>
        <dbReference type="ChEBI" id="CHEBI:146261"/>
    </reaction>
</comment>
<comment type="disruption phenotype">
    <text evidence="1">Loss of resistance to spectinomycin.</text>
</comment>
<sequence>MSNVRHHEGSVTIEISNQLSEVLSVIERHSGINVAGRAFVRSAVDGGLKPYSDIDLLVTVAVKLDETTRRALLNDLMEASAFPGESETLRAIEVTLVVHDDIIPWRYPAKRELQFGEWQRNDILAGIFEPAMIDIDLAILLTKAREHSVALVGPAAEEFFDPVPEQDLFEALRETLKLWNSQPDWAGDERNVVLTLSRIWYSAITGKIAPKDVAADWAIKRLPAQYQPVLLEAKQAYLGQKEDHLASRADHLEEFIRFVKGEIIKSVGK</sequence>
<evidence type="ECO:0000269" key="1">
    <source>
    </source>
</evidence>
<evidence type="ECO:0000269" key="2">
    <source>
    </source>
</evidence>
<evidence type="ECO:0000303" key="3">
    <source>
    </source>
</evidence>
<evidence type="ECO:0000305" key="4">
    <source>
    </source>
</evidence>
<organism>
    <name type="scientific">Rhizobium radiobacter</name>
    <name type="common">Agrobacterium tumefaciens</name>
    <name type="synonym">Agrobacterium radiobacter</name>
    <dbReference type="NCBI Taxonomy" id="358"/>
    <lineage>
        <taxon>Bacteria</taxon>
        <taxon>Pseudomonadati</taxon>
        <taxon>Pseudomonadota</taxon>
        <taxon>Alphaproteobacteria</taxon>
        <taxon>Hyphomicrobiales</taxon>
        <taxon>Rhizobiaceae</taxon>
        <taxon>Rhizobium/Agrobacterium group</taxon>
        <taxon>Agrobacterium</taxon>
        <taxon>Agrobacterium tumefaciens complex</taxon>
    </lineage>
</organism>
<protein>
    <recommendedName>
        <fullName>Aminoglycoside (3'') (9) adenylyltransferase</fullName>
        <ecNumber>2.7.7.47</ecNumber>
    </recommendedName>
    <alternativeName>
        <fullName>Streptomycin 3''-adenylyltransferase</fullName>
        <shortName evidence="3">SP-R</shortName>
    </alternativeName>
</protein>
<dbReference type="EC" id="2.7.7.47"/>
<dbReference type="EMBL" id="M11444">
    <property type="protein sequence ID" value="AAA25647.1"/>
    <property type="molecule type" value="Genomic_DNA"/>
</dbReference>
<dbReference type="SMR" id="P14511"/>
<dbReference type="GO" id="GO:0009012">
    <property type="term" value="F:aminoglycoside 3''-adenylyltransferase activity"/>
    <property type="evidence" value="ECO:0007669"/>
    <property type="project" value="UniProtKB-EC"/>
</dbReference>
<dbReference type="GO" id="GO:0005524">
    <property type="term" value="F:ATP binding"/>
    <property type="evidence" value="ECO:0007669"/>
    <property type="project" value="UniProtKB-KW"/>
</dbReference>
<dbReference type="GO" id="GO:0046677">
    <property type="term" value="P:response to antibiotic"/>
    <property type="evidence" value="ECO:0007669"/>
    <property type="project" value="UniProtKB-KW"/>
</dbReference>
<dbReference type="InterPro" id="IPR025184">
    <property type="entry name" value="AadA_C"/>
</dbReference>
<dbReference type="InterPro" id="IPR043519">
    <property type="entry name" value="NT_sf"/>
</dbReference>
<dbReference type="NCBIfam" id="NF012157">
    <property type="entry name" value="ANT_3pp_I"/>
    <property type="match status" value="1"/>
</dbReference>
<dbReference type="NCBIfam" id="NF010309">
    <property type="entry name" value="PRK13746.1"/>
    <property type="match status" value="1"/>
</dbReference>
<dbReference type="Pfam" id="PF13427">
    <property type="entry name" value="AadA_C"/>
    <property type="match status" value="1"/>
</dbReference>
<dbReference type="SUPFAM" id="SSF81301">
    <property type="entry name" value="Nucleotidyltransferase"/>
    <property type="match status" value="1"/>
</dbReference>
<name>S3AD_RHIRD</name>
<keyword id="KW-0046">Antibiotic resistance</keyword>
<keyword id="KW-0067">ATP-binding</keyword>
<keyword id="KW-0547">Nucleotide-binding</keyword>
<keyword id="KW-0548">Nucleotidyltransferase</keyword>
<keyword id="KW-0614">Plasmid</keyword>
<keyword id="KW-0808">Transferase</keyword>
<proteinExistence type="evidence at protein level"/>
<geneLocation type="plasmid">
    <name>IncW pSa</name>
</geneLocation>
<accession>P14511</accession>
<reference key="1">
    <citation type="journal article" date="1985" name="Gene">
        <title>The aminoglycoside-resistance operon of the plasmid pSa: nucleotide sequence of the streptomycin-spectinomycin resistance gene.</title>
        <authorList>
            <person name="Tait R.C."/>
            <person name="Rempel H."/>
            <person name="Rodriguez R.L."/>
            <person name="Kado C.I."/>
        </authorList>
    </citation>
    <scope>NUCLEOTIDE SEQUENCE [GENOMIC DNA]</scope>
    <scope>FUNCTION IN SPECTINOMYCIN AND PROBABLE STREPTOMYCIN RESISTANCE</scope>
    <scope>DISRUPTION PHENOTYPE</scope>
</reference>
<reference key="2">
    <citation type="journal article" date="1982" name="Mol. Gen. Genet.">
        <title>Genetic map of the crown gall suppressive IncW plasmid pSa.</title>
        <authorList>
            <person name="Tait R.C."/>
            <person name="Lundquist R.C."/>
            <person name="Kado C.I."/>
        </authorList>
    </citation>
    <scope>FUNCTION</scope>
</reference>
<feature type="chain" id="PRO_0000068583" description="Aminoglycoside (3'') (9) adenylyltransferase">
    <location>
        <begin position="1"/>
        <end position="269"/>
    </location>
</feature>